<protein>
    <recommendedName>
        <fullName evidence="2">Elongation factor Tu</fullName>
        <shortName>EF-Tu</shortName>
        <ecNumber evidence="2">3.6.5.3</ecNumber>
    </recommendedName>
    <alternativeName>
        <fullName>EF-Tu 1</fullName>
    </alternativeName>
</protein>
<organism>
    <name type="scientific">Acinetobacter baylyi (strain ATCC 33305 / BD413 / ADP1)</name>
    <dbReference type="NCBI Taxonomy" id="62977"/>
    <lineage>
        <taxon>Bacteria</taxon>
        <taxon>Pseudomonadati</taxon>
        <taxon>Pseudomonadota</taxon>
        <taxon>Gammaproteobacteria</taxon>
        <taxon>Moraxellales</taxon>
        <taxon>Moraxellaceae</taxon>
        <taxon>Acinetobacter</taxon>
    </lineage>
</organism>
<evidence type="ECO:0000250" key="1"/>
<evidence type="ECO:0000255" key="2">
    <source>
        <dbReference type="HAMAP-Rule" id="MF_00118"/>
    </source>
</evidence>
<evidence type="ECO:0000305" key="3"/>
<keyword id="KW-0963">Cytoplasm</keyword>
<keyword id="KW-0251">Elongation factor</keyword>
<keyword id="KW-0342">GTP-binding</keyword>
<keyword id="KW-0378">Hydrolase</keyword>
<keyword id="KW-0460">Magnesium</keyword>
<keyword id="KW-0479">Metal-binding</keyword>
<keyword id="KW-0547">Nucleotide-binding</keyword>
<keyword id="KW-0648">Protein biosynthesis</keyword>
<gene>
    <name evidence="2" type="primary">tuf1</name>
    <name type="synonym">tufB</name>
    <name type="ordered locus">ACIAD0299</name>
</gene>
<gene>
    <name evidence="2" type="primary">tuf2</name>
    <name type="synonym">tufA</name>
    <name type="ordered locus">ACIAD0885</name>
</gene>
<proteinExistence type="inferred from homology"/>
<comment type="function">
    <text evidence="2">GTP hydrolase that promotes the GTP-dependent binding of aminoacyl-tRNA to the A-site of ribosomes during protein biosynthesis.</text>
</comment>
<comment type="catalytic activity">
    <reaction evidence="2">
        <text>GTP + H2O = GDP + phosphate + H(+)</text>
        <dbReference type="Rhea" id="RHEA:19669"/>
        <dbReference type="ChEBI" id="CHEBI:15377"/>
        <dbReference type="ChEBI" id="CHEBI:15378"/>
        <dbReference type="ChEBI" id="CHEBI:37565"/>
        <dbReference type="ChEBI" id="CHEBI:43474"/>
        <dbReference type="ChEBI" id="CHEBI:58189"/>
        <dbReference type="EC" id="3.6.5.3"/>
    </reaction>
    <physiologicalReaction direction="left-to-right" evidence="2">
        <dbReference type="Rhea" id="RHEA:19670"/>
    </physiologicalReaction>
</comment>
<comment type="subunit">
    <text evidence="2">Monomer.</text>
</comment>
<comment type="subcellular location">
    <subcellularLocation>
        <location evidence="2">Cytoplasm</location>
    </subcellularLocation>
</comment>
<comment type="similarity">
    <text evidence="2">Belongs to the TRAFAC class translation factor GTPase superfamily. Classic translation factor GTPase family. EF-Tu/EF-1A subfamily.</text>
</comment>
<comment type="sequence caution" evidence="3">
    <conflict type="erroneous initiation">
        <sequence resource="EMBL-CDS" id="CAG67783"/>
    </conflict>
</comment>
<dbReference type="EC" id="3.6.5.3" evidence="2"/>
<dbReference type="EMBL" id="CR543861">
    <property type="protein sequence ID" value="CAG67260.1"/>
    <property type="molecule type" value="Genomic_DNA"/>
</dbReference>
<dbReference type="EMBL" id="CR543861">
    <property type="protein sequence ID" value="CAG67783.1"/>
    <property type="status" value="ALT_INIT"/>
    <property type="molecule type" value="Genomic_DNA"/>
</dbReference>
<dbReference type="RefSeq" id="WP_004922118.1">
    <property type="nucleotide sequence ID" value="NC_005966.1"/>
</dbReference>
<dbReference type="SMR" id="Q6FF97"/>
<dbReference type="STRING" id="202950.GCA_001485005_02633"/>
<dbReference type="GeneID" id="45233345"/>
<dbReference type="KEGG" id="aci:ACIAD0299"/>
<dbReference type="KEGG" id="aci:ACIAD0885"/>
<dbReference type="eggNOG" id="COG0050">
    <property type="taxonomic scope" value="Bacteria"/>
</dbReference>
<dbReference type="HOGENOM" id="CLU_007265_0_2_6"/>
<dbReference type="OrthoDB" id="9803139at2"/>
<dbReference type="BioCyc" id="ASP62977:ACIAD_RS01420-MONOMER"/>
<dbReference type="BioCyc" id="ASP62977:ACIAD_RS04085-MONOMER"/>
<dbReference type="Proteomes" id="UP000000430">
    <property type="component" value="Chromosome"/>
</dbReference>
<dbReference type="GO" id="GO:0005829">
    <property type="term" value="C:cytosol"/>
    <property type="evidence" value="ECO:0007669"/>
    <property type="project" value="TreeGrafter"/>
</dbReference>
<dbReference type="GO" id="GO:0005525">
    <property type="term" value="F:GTP binding"/>
    <property type="evidence" value="ECO:0007669"/>
    <property type="project" value="UniProtKB-UniRule"/>
</dbReference>
<dbReference type="GO" id="GO:0003924">
    <property type="term" value="F:GTPase activity"/>
    <property type="evidence" value="ECO:0007669"/>
    <property type="project" value="InterPro"/>
</dbReference>
<dbReference type="GO" id="GO:0097216">
    <property type="term" value="F:guanosine tetraphosphate binding"/>
    <property type="evidence" value="ECO:0007669"/>
    <property type="project" value="UniProtKB-ARBA"/>
</dbReference>
<dbReference type="GO" id="GO:0003746">
    <property type="term" value="F:translation elongation factor activity"/>
    <property type="evidence" value="ECO:0007669"/>
    <property type="project" value="UniProtKB-UniRule"/>
</dbReference>
<dbReference type="CDD" id="cd01884">
    <property type="entry name" value="EF_Tu"/>
    <property type="match status" value="1"/>
</dbReference>
<dbReference type="CDD" id="cd03697">
    <property type="entry name" value="EFTU_II"/>
    <property type="match status" value="1"/>
</dbReference>
<dbReference type="CDD" id="cd03707">
    <property type="entry name" value="EFTU_III"/>
    <property type="match status" value="1"/>
</dbReference>
<dbReference type="FunFam" id="2.40.30.10:FF:000001">
    <property type="entry name" value="Elongation factor Tu"/>
    <property type="match status" value="1"/>
</dbReference>
<dbReference type="FunFam" id="3.40.50.300:FF:000003">
    <property type="entry name" value="Elongation factor Tu"/>
    <property type="match status" value="1"/>
</dbReference>
<dbReference type="Gene3D" id="3.40.50.300">
    <property type="entry name" value="P-loop containing nucleotide triphosphate hydrolases"/>
    <property type="match status" value="1"/>
</dbReference>
<dbReference type="Gene3D" id="2.40.30.10">
    <property type="entry name" value="Translation factors"/>
    <property type="match status" value="2"/>
</dbReference>
<dbReference type="HAMAP" id="MF_00118_B">
    <property type="entry name" value="EF_Tu_B"/>
    <property type="match status" value="1"/>
</dbReference>
<dbReference type="InterPro" id="IPR041709">
    <property type="entry name" value="EF-Tu_GTP-bd"/>
</dbReference>
<dbReference type="InterPro" id="IPR050055">
    <property type="entry name" value="EF-Tu_GTPase"/>
</dbReference>
<dbReference type="InterPro" id="IPR004161">
    <property type="entry name" value="EFTu-like_2"/>
</dbReference>
<dbReference type="InterPro" id="IPR033720">
    <property type="entry name" value="EFTU_2"/>
</dbReference>
<dbReference type="InterPro" id="IPR031157">
    <property type="entry name" value="G_TR_CS"/>
</dbReference>
<dbReference type="InterPro" id="IPR027417">
    <property type="entry name" value="P-loop_NTPase"/>
</dbReference>
<dbReference type="InterPro" id="IPR005225">
    <property type="entry name" value="Small_GTP-bd"/>
</dbReference>
<dbReference type="InterPro" id="IPR000795">
    <property type="entry name" value="T_Tr_GTP-bd_dom"/>
</dbReference>
<dbReference type="InterPro" id="IPR009000">
    <property type="entry name" value="Transl_B-barrel_sf"/>
</dbReference>
<dbReference type="InterPro" id="IPR009001">
    <property type="entry name" value="Transl_elong_EF1A/Init_IF2_C"/>
</dbReference>
<dbReference type="InterPro" id="IPR004541">
    <property type="entry name" value="Transl_elong_EFTu/EF1A_bac/org"/>
</dbReference>
<dbReference type="InterPro" id="IPR004160">
    <property type="entry name" value="Transl_elong_EFTu/EF1A_C"/>
</dbReference>
<dbReference type="NCBIfam" id="TIGR00485">
    <property type="entry name" value="EF-Tu"/>
    <property type="match status" value="1"/>
</dbReference>
<dbReference type="NCBIfam" id="NF000766">
    <property type="entry name" value="PRK00049.1"/>
    <property type="match status" value="1"/>
</dbReference>
<dbReference type="NCBIfam" id="NF009372">
    <property type="entry name" value="PRK12735.1"/>
    <property type="match status" value="1"/>
</dbReference>
<dbReference type="NCBIfam" id="NF009373">
    <property type="entry name" value="PRK12736.1"/>
    <property type="match status" value="1"/>
</dbReference>
<dbReference type="NCBIfam" id="TIGR00231">
    <property type="entry name" value="small_GTP"/>
    <property type="match status" value="1"/>
</dbReference>
<dbReference type="PANTHER" id="PTHR43721:SF22">
    <property type="entry name" value="ELONGATION FACTOR TU, MITOCHONDRIAL"/>
    <property type="match status" value="1"/>
</dbReference>
<dbReference type="PANTHER" id="PTHR43721">
    <property type="entry name" value="ELONGATION FACTOR TU-RELATED"/>
    <property type="match status" value="1"/>
</dbReference>
<dbReference type="Pfam" id="PF00009">
    <property type="entry name" value="GTP_EFTU"/>
    <property type="match status" value="1"/>
</dbReference>
<dbReference type="Pfam" id="PF03144">
    <property type="entry name" value="GTP_EFTU_D2"/>
    <property type="match status" value="1"/>
</dbReference>
<dbReference type="Pfam" id="PF03143">
    <property type="entry name" value="GTP_EFTU_D3"/>
    <property type="match status" value="1"/>
</dbReference>
<dbReference type="PRINTS" id="PR00315">
    <property type="entry name" value="ELONGATNFCT"/>
</dbReference>
<dbReference type="SUPFAM" id="SSF50465">
    <property type="entry name" value="EF-Tu/eEF-1alpha/eIF2-gamma C-terminal domain"/>
    <property type="match status" value="1"/>
</dbReference>
<dbReference type="SUPFAM" id="SSF52540">
    <property type="entry name" value="P-loop containing nucleoside triphosphate hydrolases"/>
    <property type="match status" value="1"/>
</dbReference>
<dbReference type="SUPFAM" id="SSF50447">
    <property type="entry name" value="Translation proteins"/>
    <property type="match status" value="1"/>
</dbReference>
<dbReference type="PROSITE" id="PS00301">
    <property type="entry name" value="G_TR_1"/>
    <property type="match status" value="1"/>
</dbReference>
<dbReference type="PROSITE" id="PS51722">
    <property type="entry name" value="G_TR_2"/>
    <property type="match status" value="1"/>
</dbReference>
<accession>Q6FF97</accession>
<accession>Q6FDS5</accession>
<sequence>MAKAKFERNKPHVNVGTIGHVDHGKTTLTAAIATICAKTYGGEAKDYSQIDSAPEEKARGITINTSHVEYDSPIRHYAHVDCPGHADYVKNMITGAAQMDGAILVCAATDGPMPQTREHILLSRQVGVPYIVVFLNKCDLVDDEELLELVEMEVRELLSTYDFPGDDTPVIRGSALKALEGDAGQYGESSVLALVEALDTYIPEPERAIDKAFLMPIEDVFSISGRGTVVTGRVEAGIVKVGESVEIVGIRDTQTTTVTGVEMFRKLLDEGRAGENCGVLLRGTKREDVQRGQVLAKPGTIKPHTKFDAEVYVLSKEEGGRHTPFLNGYRPQFYFRTTDVTGAIQLKEGVEMVMPGDNVEMSVELIHPIAMDPGLRFAIREGGRTVGAGVVAKVTA</sequence>
<name>EFTU_ACIAD</name>
<reference key="1">
    <citation type="journal article" date="2004" name="Nucleic Acids Res.">
        <title>Unique features revealed by the genome sequence of Acinetobacter sp. ADP1, a versatile and naturally transformation competent bacterium.</title>
        <authorList>
            <person name="Barbe V."/>
            <person name="Vallenet D."/>
            <person name="Fonknechten N."/>
            <person name="Kreimeyer A."/>
            <person name="Oztas S."/>
            <person name="Labarre L."/>
            <person name="Cruveiller S."/>
            <person name="Robert C."/>
            <person name="Duprat S."/>
            <person name="Wincker P."/>
            <person name="Ornston L.N."/>
            <person name="Weissenbach J."/>
            <person name="Marliere P."/>
            <person name="Cohen G.N."/>
            <person name="Medigue C."/>
        </authorList>
    </citation>
    <scope>NUCLEOTIDE SEQUENCE [LARGE SCALE GENOMIC DNA]</scope>
    <source>
        <strain>ATCC 33305 / BD413 / ADP1</strain>
    </source>
</reference>
<feature type="chain" id="PRO_0000337302" description="Elongation factor Tu">
    <location>
        <begin position="1"/>
        <end position="396"/>
    </location>
</feature>
<feature type="domain" description="tr-type G">
    <location>
        <begin position="10"/>
        <end position="206"/>
    </location>
</feature>
<feature type="region of interest" description="G1" evidence="1">
    <location>
        <begin position="19"/>
        <end position="26"/>
    </location>
</feature>
<feature type="region of interest" description="G2" evidence="1">
    <location>
        <begin position="60"/>
        <end position="64"/>
    </location>
</feature>
<feature type="region of interest" description="G3" evidence="1">
    <location>
        <begin position="81"/>
        <end position="84"/>
    </location>
</feature>
<feature type="region of interest" description="G4" evidence="1">
    <location>
        <begin position="136"/>
        <end position="139"/>
    </location>
</feature>
<feature type="region of interest" description="G5" evidence="1">
    <location>
        <begin position="174"/>
        <end position="176"/>
    </location>
</feature>
<feature type="binding site" evidence="2">
    <location>
        <begin position="19"/>
        <end position="26"/>
    </location>
    <ligand>
        <name>GTP</name>
        <dbReference type="ChEBI" id="CHEBI:37565"/>
    </ligand>
</feature>
<feature type="binding site" evidence="2">
    <location>
        <position position="26"/>
    </location>
    <ligand>
        <name>Mg(2+)</name>
        <dbReference type="ChEBI" id="CHEBI:18420"/>
    </ligand>
</feature>
<feature type="binding site" evidence="2">
    <location>
        <begin position="81"/>
        <end position="85"/>
    </location>
    <ligand>
        <name>GTP</name>
        <dbReference type="ChEBI" id="CHEBI:37565"/>
    </ligand>
</feature>
<feature type="binding site" evidence="2">
    <location>
        <begin position="136"/>
        <end position="139"/>
    </location>
    <ligand>
        <name>GTP</name>
        <dbReference type="ChEBI" id="CHEBI:37565"/>
    </ligand>
</feature>